<accession>Q5SD40</accession>
<dbReference type="EMBL" id="AY660566">
    <property type="protein sequence ID" value="AAT80711.1"/>
    <property type="molecule type" value="Genomic_DNA"/>
</dbReference>
<dbReference type="RefSeq" id="YP_209515.1">
    <property type="nucleotide sequence ID" value="NC_006861.1"/>
</dbReference>
<dbReference type="SMR" id="Q5SD40"/>
<dbReference type="GeneID" id="3283714"/>
<dbReference type="GO" id="GO:0009535">
    <property type="term" value="C:chloroplast thylakoid membrane"/>
    <property type="evidence" value="ECO:0007669"/>
    <property type="project" value="UniProtKB-SubCell"/>
</dbReference>
<dbReference type="GO" id="GO:0009539">
    <property type="term" value="C:photosystem II reaction center"/>
    <property type="evidence" value="ECO:0007669"/>
    <property type="project" value="InterPro"/>
</dbReference>
<dbReference type="GO" id="GO:0015979">
    <property type="term" value="P:photosynthesis"/>
    <property type="evidence" value="ECO:0007669"/>
    <property type="project" value="UniProtKB-UniRule"/>
</dbReference>
<dbReference type="Gene3D" id="6.10.250.2070">
    <property type="match status" value="1"/>
</dbReference>
<dbReference type="HAMAP" id="MF_01305">
    <property type="entry name" value="PSII_PsbJ"/>
    <property type="match status" value="1"/>
</dbReference>
<dbReference type="InterPro" id="IPR002682">
    <property type="entry name" value="PSII_PsbJ"/>
</dbReference>
<dbReference type="InterPro" id="IPR037267">
    <property type="entry name" value="PSII_PsbJ_sf"/>
</dbReference>
<dbReference type="NCBIfam" id="NF002722">
    <property type="entry name" value="PRK02565.1"/>
    <property type="match status" value="1"/>
</dbReference>
<dbReference type="PANTHER" id="PTHR34812">
    <property type="entry name" value="PHOTOSYSTEM II REACTION CENTER PROTEIN J"/>
    <property type="match status" value="1"/>
</dbReference>
<dbReference type="PANTHER" id="PTHR34812:SF3">
    <property type="entry name" value="PHOTOSYSTEM II REACTION CENTER PROTEIN J"/>
    <property type="match status" value="1"/>
</dbReference>
<dbReference type="Pfam" id="PF01788">
    <property type="entry name" value="PsbJ"/>
    <property type="match status" value="1"/>
</dbReference>
<dbReference type="SUPFAM" id="SSF161021">
    <property type="entry name" value="Photosystem II reaction center protein J, PsbJ"/>
    <property type="match status" value="1"/>
</dbReference>
<sequence>MANTTGRIPLWLIGTVVGTPVISLVGIFSYGSYSGLGSSL</sequence>
<protein>
    <recommendedName>
        <fullName evidence="1">Photosystem II reaction center protein J</fullName>
        <shortName evidence="1">PSII-J</shortName>
    </recommendedName>
</protein>
<keyword id="KW-0150">Chloroplast</keyword>
<keyword id="KW-0472">Membrane</keyword>
<keyword id="KW-0602">Photosynthesis</keyword>
<keyword id="KW-0604">Photosystem II</keyword>
<keyword id="KW-0934">Plastid</keyword>
<keyword id="KW-0674">Reaction center</keyword>
<keyword id="KW-0793">Thylakoid</keyword>
<keyword id="KW-0812">Transmembrane</keyword>
<keyword id="KW-1133">Transmembrane helix</keyword>
<evidence type="ECO:0000255" key="1">
    <source>
        <dbReference type="HAMAP-Rule" id="MF_01305"/>
    </source>
</evidence>
<feature type="chain" id="PRO_0000216596" description="Photosystem II reaction center protein J">
    <location>
        <begin position="1"/>
        <end position="40"/>
    </location>
</feature>
<feature type="transmembrane region" description="Helical" evidence="1">
    <location>
        <begin position="8"/>
        <end position="28"/>
    </location>
</feature>
<organism>
    <name type="scientific">Huperzia lucidula</name>
    <name type="common">Shining clubmoss</name>
    <name type="synonym">Lycopodium lucidulum</name>
    <dbReference type="NCBI Taxonomy" id="37429"/>
    <lineage>
        <taxon>Eukaryota</taxon>
        <taxon>Viridiplantae</taxon>
        <taxon>Streptophyta</taxon>
        <taxon>Embryophyta</taxon>
        <taxon>Tracheophyta</taxon>
        <taxon>Lycopodiopsida</taxon>
        <taxon>Lycopodiales</taxon>
        <taxon>Lycopodiaceae</taxon>
        <taxon>Huperzioideae</taxon>
        <taxon>Huperzia</taxon>
    </lineage>
</organism>
<geneLocation type="chloroplast"/>
<comment type="function">
    <text evidence="1">One of the components of the core complex of photosystem II (PSII). PSII is a light-driven water:plastoquinone oxidoreductase that uses light energy to abstract electrons from H(2)O, generating O(2) and a proton gradient subsequently used for ATP formation. It consists of a core antenna complex that captures photons, and an electron transfer chain that converts photonic excitation into a charge separation.</text>
</comment>
<comment type="subunit">
    <text evidence="1">PSII is composed of 1 copy each of membrane proteins PsbA, PsbB, PsbC, PsbD, PsbE, PsbF, PsbH, PsbI, PsbJ, PsbK, PsbL, PsbM, PsbT, PsbX, PsbY, PsbZ, Psb30/Ycf12, at least 3 peripheral proteins of the oxygen-evolving complex and a large number of cofactors. It forms dimeric complexes.</text>
</comment>
<comment type="subcellular location">
    <subcellularLocation>
        <location evidence="1">Plastid</location>
        <location evidence="1">Chloroplast thylakoid membrane</location>
        <topology evidence="1">Single-pass membrane protein</topology>
    </subcellularLocation>
</comment>
<comment type="similarity">
    <text evidence="1">Belongs to the PsbJ family.</text>
</comment>
<gene>
    <name evidence="1" type="primary">psbJ</name>
</gene>
<reference key="1">
    <citation type="journal article" date="2005" name="Gene">
        <title>The first complete chloroplast genome sequence of a lycophyte, Huperzia lucidula (Lycopodiaceae).</title>
        <authorList>
            <person name="Wolf P.G."/>
            <person name="Karol K.G."/>
            <person name="Mandoli D.F."/>
            <person name="Kuehl J.V."/>
            <person name="Arumuganathan K."/>
            <person name="Ellis M.W."/>
            <person name="Mishler B.D."/>
            <person name="Kelch D.G."/>
            <person name="Olmstead R.G."/>
            <person name="Boore J.L."/>
        </authorList>
    </citation>
    <scope>NUCLEOTIDE SEQUENCE [LARGE SCALE GENOMIC DNA]</scope>
</reference>
<name>PSBJ_HUPLU</name>
<proteinExistence type="inferred from homology"/>